<organism>
    <name type="scientific">Staphylococcus phage S phi-C</name>
    <name type="common">Bacteriophage S phi-C</name>
    <dbReference type="NCBI Taxonomy" id="10721"/>
    <lineage>
        <taxon>Viruses</taxon>
        <taxon>Duplodnaviria</taxon>
        <taxon>Heunggongvirae</taxon>
        <taxon>Uroviricota</taxon>
        <taxon>Caudoviricetes</taxon>
        <taxon>Lambdavirus</taxon>
    </lineage>
</organism>
<sequence>MLKRSLLFLTVLLLLFSFSSITNEVSASSSFDKGKYKKGDDASYFEPTGPYLMVNVTGVDGKGNELLSPHYVEFPIKPGTTLTKEKIEYYVEWALDATAYKEFRVVELDPSAKIEVTYYDKNKKKEETKSFPITEKGFVVPDLSEHIKNPGFNLITKVVIEKK</sequence>
<comment type="function">
    <text>Potent plasminogen activator that converts plasminogen into plasmin. It forms a 1:1 complex with plasmin, which in turn activates other plasminogen molecules.</text>
</comment>
<comment type="subcellular location">
    <subcellularLocation>
        <location>Secreted</location>
    </subcellularLocation>
</comment>
<comment type="pharmaceutical">
    <text>Currently in clinical testing as a highly fibrin-specific thrombolytic agent for the treatment of patients with acute myocardial infarction or peripheral arterial occlusions.</text>
</comment>
<comment type="similarity">
    <text evidence="2">Belongs to the staphylokinase family.</text>
</comment>
<name>SAK_BPSPC</name>
<proteinExistence type="evidence at protein level"/>
<dbReference type="EMBL" id="X00127">
    <property type="protein sequence ID" value="CAA24957.1"/>
    <property type="molecule type" value="Genomic_DNA"/>
</dbReference>
<dbReference type="PDB" id="1C76">
    <property type="method" value="X-ray"/>
    <property type="resolution" value="2.25 A"/>
    <property type="chains" value="A=28-163"/>
</dbReference>
<dbReference type="PDB" id="1C77">
    <property type="method" value="X-ray"/>
    <property type="resolution" value="2.30 A"/>
    <property type="chains" value="A/B=28-163"/>
</dbReference>
<dbReference type="PDB" id="1C78">
    <property type="method" value="X-ray"/>
    <property type="resolution" value="2.30 A"/>
    <property type="chains" value="A/B=28-163"/>
</dbReference>
<dbReference type="PDB" id="1C79">
    <property type="method" value="X-ray"/>
    <property type="resolution" value="2.30 A"/>
    <property type="chains" value="A/B=28-163"/>
</dbReference>
<dbReference type="PDB" id="1SSN">
    <property type="method" value="NMR"/>
    <property type="chains" value="A=28-163"/>
</dbReference>
<dbReference type="PDB" id="2SAK">
    <property type="method" value="X-ray"/>
    <property type="resolution" value="1.80 A"/>
    <property type="chains" value="A=43-163"/>
</dbReference>
<dbReference type="PDBsum" id="1C76"/>
<dbReference type="PDBsum" id="1C77"/>
<dbReference type="PDBsum" id="1C78"/>
<dbReference type="PDBsum" id="1C79"/>
<dbReference type="PDBsum" id="1SSN"/>
<dbReference type="PDBsum" id="2SAK"/>
<dbReference type="BMRB" id="P68802"/>
<dbReference type="SMR" id="P68802"/>
<dbReference type="EvolutionaryTrace" id="P68802"/>
<dbReference type="PRO" id="PR:P68802"/>
<dbReference type="GO" id="GO:0005576">
    <property type="term" value="C:extracellular region"/>
    <property type="evidence" value="ECO:0007669"/>
    <property type="project" value="UniProtKB-SubCell"/>
</dbReference>
<dbReference type="GO" id="GO:0044542">
    <property type="term" value="P:symbiont-mediated activation of host plasminogen"/>
    <property type="evidence" value="ECO:0000269"/>
    <property type="project" value="SigSci"/>
</dbReference>
<dbReference type="GO" id="GO:0141203">
    <property type="term" value="P:symbiont-mediated suppression of host complement activation by activation of host proteases"/>
    <property type="evidence" value="ECO:0000269"/>
    <property type="project" value="SigSci"/>
</dbReference>
<dbReference type="Gene3D" id="3.10.20.130">
    <property type="match status" value="1"/>
</dbReference>
<dbReference type="InterPro" id="IPR004093">
    <property type="entry name" value="SAK"/>
</dbReference>
<dbReference type="InterPro" id="IPR036120">
    <property type="entry name" value="SAK/SK_sf"/>
</dbReference>
<dbReference type="Pfam" id="PF02821">
    <property type="entry name" value="Staphylokinase"/>
    <property type="match status" value="1"/>
</dbReference>
<dbReference type="SUPFAM" id="SSF54328">
    <property type="entry name" value="Staphylokinase/streptokinase"/>
    <property type="match status" value="1"/>
</dbReference>
<evidence type="ECO:0000303" key="1">
    <source>
    </source>
</evidence>
<evidence type="ECO:0000305" key="2"/>
<evidence type="ECO:0007829" key="3">
    <source>
        <dbReference type="PDB" id="1SSN"/>
    </source>
</evidence>
<evidence type="ECO:0007829" key="4">
    <source>
        <dbReference type="PDB" id="2SAK"/>
    </source>
</evidence>
<gene>
    <name evidence="1" type="primary">sak</name>
</gene>
<accession>P68802</accession>
<accession>P00802</accession>
<protein>
    <recommendedName>
        <fullName>Staphylokinase</fullName>
    </recommendedName>
    <alternativeName>
        <fullName>Neutral proteinase</fullName>
    </alternativeName>
    <alternativeName>
        <fullName>Protease III</fullName>
    </alternativeName>
    <alternativeName>
        <fullName>SakSTAR</fullName>
    </alternativeName>
</protein>
<organismHost>
    <name type="scientific">Staphylococcus aureus</name>
    <dbReference type="NCBI Taxonomy" id="1280"/>
</organismHost>
<feature type="signal peptide">
    <location>
        <begin position="1"/>
        <end position="27"/>
    </location>
</feature>
<feature type="chain" id="PRO_0000031603" description="Staphylokinase">
    <location>
        <begin position="28"/>
        <end position="163"/>
    </location>
</feature>
<feature type="helix" evidence="3">
    <location>
        <begin position="37"/>
        <end position="39"/>
    </location>
</feature>
<feature type="strand" evidence="3">
    <location>
        <begin position="44"/>
        <end position="47"/>
    </location>
</feature>
<feature type="strand" evidence="4">
    <location>
        <begin position="51"/>
        <end position="59"/>
    </location>
</feature>
<feature type="strand" evidence="4">
    <location>
        <begin position="65"/>
        <end position="75"/>
    </location>
</feature>
<feature type="strand" evidence="3">
    <location>
        <begin position="80"/>
        <end position="83"/>
    </location>
</feature>
<feature type="helix" evidence="4">
    <location>
        <begin position="84"/>
        <end position="95"/>
    </location>
</feature>
<feature type="turn" evidence="4">
    <location>
        <begin position="99"/>
        <end position="102"/>
    </location>
</feature>
<feature type="strand" evidence="4">
    <location>
        <begin position="104"/>
        <end position="108"/>
    </location>
</feature>
<feature type="strand" evidence="4">
    <location>
        <begin position="114"/>
        <end position="120"/>
    </location>
</feature>
<feature type="turn" evidence="4">
    <location>
        <begin position="121"/>
        <end position="124"/>
    </location>
</feature>
<feature type="strand" evidence="4">
    <location>
        <begin position="125"/>
        <end position="131"/>
    </location>
</feature>
<feature type="turn" evidence="4">
    <location>
        <begin position="144"/>
        <end position="146"/>
    </location>
</feature>
<feature type="strand" evidence="4">
    <location>
        <begin position="151"/>
        <end position="161"/>
    </location>
</feature>
<reference key="1">
    <citation type="journal article" date="1983" name="Nucleic Acids Res.">
        <title>Nucleotide sequence of the staphylokinase gene from Staphylococcus aureus.</title>
        <authorList>
            <person name="Sako T."/>
            <person name="Tsuchida N."/>
        </authorList>
    </citation>
    <scope>NUCLEOTIDE SEQUENCE [GENOMIC DNA]</scope>
</reference>
<reference key="2">
    <citation type="journal article" date="1997" name="Nat. Struct. Biol.">
        <title>Three-dimensional structure of staphylokinase, a plasminogen activator with therapeutic potential.</title>
        <authorList>
            <person name="Rabijns A."/>
            <person name="de Bondt H.L."/>
            <person name="de Ranter C."/>
        </authorList>
    </citation>
    <scope>X-RAY CRYSTALLOGRAPHY (1.8 ANGSTROMS) OF 43-163</scope>
</reference>
<reference key="3">
    <citation type="journal article" date="1998" name="Nat. Struct. Biol.">
        <title>The ternary microplasmin-staphylokinase-microplasmin complex is a proteinase-cofactor-substrate complex in action.</title>
        <authorList>
            <person name="Parry M.A."/>
            <person name="Fernandez-Catalan C."/>
            <person name="Bergner A."/>
            <person name="Huber R."/>
            <person name="Hopfner K.P."/>
            <person name="Schlott B."/>
            <person name="Guehrs K.H."/>
            <person name="Bode W."/>
        </authorList>
    </citation>
    <scope>X-RAY CRYSTALLOGRAPHY (2.65 ANGSTROMS) OF 36-163 IN COMPLEX IN PLASMINOGEN</scope>
</reference>
<reference key="4">
    <citation type="journal article" date="1998" name="Biochemistry">
        <title>Nuclear magnetic resonance solution structure of the plasminogen-activator protein staphylokinase.</title>
        <authorList>
            <person name="Ohlenschlaeger O."/>
            <person name="Ramachandran R."/>
            <person name="Guehrs K.H."/>
            <person name="Schlott B."/>
            <person name="Brown L.R."/>
        </authorList>
    </citation>
    <scope>STRUCTURE BY NMR OF 28-163</scope>
</reference>
<keyword id="KW-0002">3D-structure</keyword>
<keyword id="KW-0582">Pharmaceutical</keyword>
<keyword id="KW-0617">Plasminogen activation</keyword>
<keyword id="KW-0964">Secreted</keyword>
<keyword id="KW-0732">Signal</keyword>